<reference key="1">
    <citation type="journal article" date="1987" name="EMBO J.">
        <title>The regulatory c1 locus of Zea mays encodes a protein with homology to myb proto-oncogene products and with structural similarities to transcriptional activators.</title>
        <authorList>
            <person name="Paz-Ares J."/>
            <person name="Ghosal D."/>
            <person name="Wienand U."/>
            <person name="Peterson P.A."/>
            <person name="Saedler H."/>
        </authorList>
    </citation>
    <scope>NUCLEOTIDE SEQUENCE [GENOMIC DNA]</scope>
</reference>
<reference key="2">
    <citation type="journal article" date="1990" name="EMBO J.">
        <title>Molecular analysis of the C1-I allele from Zea mays: a dominant mutant of the regulatory C1 locus.</title>
        <authorList>
            <person name="Paz-Ares J."/>
            <person name="Ghosal D."/>
            <person name="Saedler H."/>
        </authorList>
    </citation>
    <scope>NUCLEOTIDE SEQUENCE [GENOMIC DNA] (C1-I)</scope>
</reference>
<reference key="3">
    <citation type="journal article" date="2004" name="Mol. Biotechnol.">
        <title>Ectopic expression of a c1-I allele from maize inhibits pigment formation in the flower of transgenic tobacco.</title>
        <authorList>
            <person name="Chen B."/>
            <person name="Wang X."/>
            <person name="Hu Y."/>
            <person name="Wang Y."/>
            <person name="Lin Z."/>
        </authorList>
    </citation>
    <scope>NUCLEOTIDE SEQUENCE [MRNA] (C1-I-2K1)</scope>
    <source>
        <strain>cv. 2K1 purple</strain>
    </source>
</reference>
<reference key="4">
    <citation type="submission" date="2003-11" db="EMBL/GenBank/DDBJ databases">
        <title>Identification of a new maize anthocyanin regulatory gene.</title>
        <authorList>
            <person name="Cooper P."/>
            <person name="Cone K.C."/>
        </authorList>
    </citation>
    <scope>NUCLEOTIDE SEQUENCE [GENOMIC DNA] (C1-1162/C1-1170)</scope>
</reference>
<reference key="5">
    <citation type="submission" date="2004-01" db="EMBL/GenBank/DDBJ databases">
        <title>Extensive shuffling of gene order in genomes of the grass family.</title>
        <authorList>
            <person name="Lai J."/>
            <person name="Swigonova Z."/>
            <person name="Ma J."/>
            <person name="Ramakrishna W."/>
            <person name="Bennetzen J.L."/>
            <person name="Messing J."/>
        </authorList>
    </citation>
    <scope>NUCLEOTIDE SEQUENCE [GENOMIC DNA] (C1-B73)</scope>
    <source>
        <strain>cv. B73</strain>
    </source>
</reference>
<sequence>MGRRACCAKEGVKRGAWTSKEDDALAAYVKAHGEGKWREVPQKAGLRRCGKSCRLRWLNYLRPNIRRGNISYDEEDLIIRLHRLLGNRWSLIAGRLPGRTDNEIKNYWNSTLGRRAGAGAGAGGSWVVVAPDTGSHATPAATSGACETGQNSAAHRADPDSAGTTTTSAAAVWAPKAVRCTGGLFFFHRDTTPAHAGETATPMAGGGGGGGGEAGSSDDCSSAASVSLRVGSHDEPCFSGDGDGDWMDDVRALASFLESDEDWLRCQTAGQLA</sequence>
<organism>
    <name type="scientific">Zea mays</name>
    <name type="common">Maize</name>
    <dbReference type="NCBI Taxonomy" id="4577"/>
    <lineage>
        <taxon>Eukaryota</taxon>
        <taxon>Viridiplantae</taxon>
        <taxon>Streptophyta</taxon>
        <taxon>Embryophyta</taxon>
        <taxon>Tracheophyta</taxon>
        <taxon>Spermatophyta</taxon>
        <taxon>Magnoliopsida</taxon>
        <taxon>Liliopsida</taxon>
        <taxon>Poales</taxon>
        <taxon>Poaceae</taxon>
        <taxon>PACMAD clade</taxon>
        <taxon>Panicoideae</taxon>
        <taxon>Andropogonodae</taxon>
        <taxon>Andropogoneae</taxon>
        <taxon>Tripsacinae</taxon>
        <taxon>Zea</taxon>
    </lineage>
</organism>
<evidence type="ECO:0000255" key="1">
    <source>
        <dbReference type="PROSITE-ProRule" id="PRU00625"/>
    </source>
</evidence>
<evidence type="ECO:0000256" key="2">
    <source>
        <dbReference type="SAM" id="MobiDB-lite"/>
    </source>
</evidence>
<evidence type="ECO:0000305" key="3"/>
<comment type="function">
    <text>Controls the expression of genes involved in anthocyanin biosynthesis. Regulates the expression of at least 3 structural genes: chalcone synthase, dihydroflavonol reductase and flavonol O(3) glucosyltransferase. C1 acts as a trans-acting factor.</text>
</comment>
<comment type="subcellular location">
    <subcellularLocation>
        <location evidence="3">Nucleus</location>
    </subcellularLocation>
</comment>
<comment type="polymorphism">
    <text>C1-1162 and C1-1170 alleles are identical to the wild-type sequence. The C1-I allele is a dominant negative mutant which inhibits pigment formation.</text>
</comment>
<comment type="miscellaneous">
    <text>According to PubMed:2303027, C1-I allele might be alternatively spliced, giving rise to a much smaller protein.</text>
</comment>
<feature type="chain" id="PRO_0000197063" description="Anthocyanin regulatory C1 protein">
    <location>
        <begin position="1"/>
        <end position="273"/>
    </location>
</feature>
<feature type="domain" description="HTH myb-type 1" evidence="1">
    <location>
        <begin position="9"/>
        <end position="65"/>
    </location>
</feature>
<feature type="domain" description="HTH myb-type 2" evidence="1">
    <location>
        <begin position="66"/>
        <end position="116"/>
    </location>
</feature>
<feature type="DNA-binding region" description="H-T-H motif" evidence="1">
    <location>
        <begin position="37"/>
        <end position="61"/>
    </location>
</feature>
<feature type="DNA-binding region" description="H-T-H motif" evidence="1">
    <location>
        <begin position="89"/>
        <end position="112"/>
    </location>
</feature>
<feature type="region of interest" description="Disordered" evidence="2">
    <location>
        <begin position="137"/>
        <end position="164"/>
    </location>
</feature>
<feature type="region of interest" description="Disordered" evidence="2">
    <location>
        <begin position="196"/>
        <end position="220"/>
    </location>
</feature>
<feature type="compositionally biased region" description="Gly residues" evidence="2">
    <location>
        <begin position="204"/>
        <end position="214"/>
    </location>
</feature>
<feature type="sequence variant" description="In allele C1-B73.">
    <original>L</original>
    <variation>LM</variation>
    <location>
        <position position="77"/>
    </location>
</feature>
<feature type="sequence variant" description="In allele C1-I and allele C1-I-2K1.">
    <original>D</original>
    <variation>E</variation>
    <location>
        <position position="101"/>
    </location>
</feature>
<feature type="sequence variant" description="In allele C1-I and allele C1-I-2K1.">
    <location>
        <begin position="116"/>
        <end position="117"/>
    </location>
</feature>
<feature type="sequence variant" description="In allele C1-B73, allele C1-I and allele C1-I-2K1.">
    <original>W</original>
    <variation>R</variation>
    <location>
        <position position="126"/>
    </location>
</feature>
<feature type="sequence variant" description="In allele C1-B73.">
    <original>V</original>
    <variation>I</variation>
    <location>
        <position position="129"/>
    </location>
</feature>
<feature type="sequence variant" description="In allele C1-B73 and allele C1-I.">
    <original>AC</original>
    <variation>SG</variation>
    <location>
        <begin position="145"/>
        <end position="146"/>
    </location>
</feature>
<feature type="sequence variant" description="In allele C1-I-2K1.">
    <original>AC</original>
    <variation>SS</variation>
    <location>
        <begin position="145"/>
        <end position="146"/>
    </location>
</feature>
<feature type="sequence variant" description="In allele C1-B73, allele C1-I and allele C1-I-2K1.">
    <original>NS</original>
    <variation>KG</variation>
    <location>
        <begin position="151"/>
        <end position="152"/>
    </location>
</feature>
<feature type="sequence variant" description="In allele C1-B73, allele C1-I and allele C1-I-2K1.">
    <original>H</original>
    <variation>P</variation>
    <location>
        <position position="155"/>
    </location>
</feature>
<feature type="sequence variant" description="In allele C1-I and C1-I-2K1.">
    <original>G</original>
    <variation>S</variation>
    <location>
        <position position="182"/>
    </location>
</feature>
<feature type="sequence variant" description="In allele C1-B73.">
    <location>
        <begin position="205"/>
        <end position="206"/>
    </location>
</feature>
<feature type="sequence variant" description="In allele C1-I and allele C1-I-2K1.">
    <original>G</original>
    <variation>GVG</variation>
    <location>
        <position position="208"/>
    </location>
</feature>
<feature type="sequence variant" description="In allele C1-B73.">
    <original>G</original>
    <variation>L</variation>
    <location>
        <position position="210"/>
    </location>
</feature>
<feature type="sequence variant" description="In allele C1-B73.">
    <original>D</original>
    <variation>E</variation>
    <location>
        <position position="218"/>
    </location>
</feature>
<feature type="sequence variant" description="In allele C1-B73, allele C1-I and allele C1-I-2K1.">
    <original>L</original>
    <variation>P</variation>
    <location>
        <position position="228"/>
    </location>
</feature>
<feature type="sequence variant" description="In allele C1-B73.">
    <original>R</original>
    <variation>L</variation>
    <location>
        <position position="229"/>
    </location>
</feature>
<feature type="sequence variant" description="In allele C1-B73.">
    <original>H</original>
    <variation>Q</variation>
    <location>
        <position position="233"/>
    </location>
</feature>
<feature type="sequence variant" description="In allele C1-B73.">
    <original>G</original>
    <variation>C</variation>
    <location>
        <position position="244"/>
    </location>
</feature>
<feature type="sequence variant" description="In allele C1-I-2K1.">
    <original>WMDD</original>
    <variation>SWTT</variation>
    <location>
        <begin position="246"/>
        <end position="249"/>
    </location>
</feature>
<feature type="sequence variant" description="In allele C1-I.">
    <original>DVRA</original>
    <variation>SWTT</variation>
    <location>
        <begin position="249"/>
        <end position="252"/>
    </location>
</feature>
<feature type="sequence variant" description="In allele C1-I-2K1.">
    <location>
        <begin position="250"/>
        <end position="273"/>
    </location>
</feature>
<feature type="sequence variant" description="In allele C1-I.">
    <location>
        <begin position="253"/>
        <end position="273"/>
    </location>
</feature>
<gene>
    <name type="primary">C1</name>
    <name type="synonym">C1-B73</name>
    <name type="synonym">C1-I</name>
    <name type="synonym">c1-I-2K1</name>
    <name type="ORF">Z438D03.27</name>
</gene>
<protein>
    <recommendedName>
        <fullName>Anthocyanin regulatory C1 protein</fullName>
    </recommendedName>
</protein>
<accession>P10290</accession>
<accession>P23592</accession>
<accession>Q84V61</accession>
<proteinExistence type="evidence at transcript level"/>
<name>MYBC_MAIZE</name>
<dbReference type="EMBL" id="M37153">
    <property type="protein sequence ID" value="AAA33482.1"/>
    <property type="molecule type" value="Genomic_DNA"/>
</dbReference>
<dbReference type="EMBL" id="X52201">
    <property type="protein sequence ID" value="CAA36456.1"/>
    <property type="molecule type" value="Genomic_DNA"/>
</dbReference>
<dbReference type="EMBL" id="AY237128">
    <property type="protein sequence ID" value="AAO85386.1"/>
    <property type="molecule type" value="mRNA"/>
</dbReference>
<dbReference type="EMBL" id="AF320613">
    <property type="protein sequence ID" value="AAK09326.1"/>
    <property type="molecule type" value="Genomic_DNA"/>
</dbReference>
<dbReference type="EMBL" id="AF320614">
    <property type="protein sequence ID" value="AAK09327.1"/>
    <property type="molecule type" value="Genomic_DNA"/>
</dbReference>
<dbReference type="EMBL" id="AY530950">
    <property type="protein sequence ID" value="AAT08011.1"/>
    <property type="molecule type" value="Genomic_DNA"/>
</dbReference>
<dbReference type="PIR" id="S06215">
    <property type="entry name" value="TVZMMB"/>
</dbReference>
<dbReference type="RefSeq" id="NP_001106010.1">
    <property type="nucleotide sequence ID" value="NM_001112540.1"/>
</dbReference>
<dbReference type="RefSeq" id="XP_008659144.1">
    <property type="nucleotide sequence ID" value="XM_008660922.1"/>
</dbReference>
<dbReference type="SMR" id="P10290"/>
<dbReference type="STRING" id="4577.P10290"/>
<dbReference type="PaxDb" id="4577-GRMZM2G005066_P01"/>
<dbReference type="KEGG" id="zma:541757"/>
<dbReference type="MaizeGDB" id="24964"/>
<dbReference type="eggNOG" id="KOG0048">
    <property type="taxonomic scope" value="Eukaryota"/>
</dbReference>
<dbReference type="InParanoid" id="P10290"/>
<dbReference type="OrthoDB" id="2143914at2759"/>
<dbReference type="Proteomes" id="UP000007305">
    <property type="component" value="Unplaced"/>
</dbReference>
<dbReference type="ExpressionAtlas" id="P10290">
    <property type="expression patterns" value="baseline and differential"/>
</dbReference>
<dbReference type="GO" id="GO:0005634">
    <property type="term" value="C:nucleus"/>
    <property type="evidence" value="ECO:0000318"/>
    <property type="project" value="GO_Central"/>
</dbReference>
<dbReference type="GO" id="GO:0000976">
    <property type="term" value="F:transcription cis-regulatory region binding"/>
    <property type="evidence" value="ECO:0000318"/>
    <property type="project" value="GO_Central"/>
</dbReference>
<dbReference type="GO" id="GO:0030154">
    <property type="term" value="P:cell differentiation"/>
    <property type="evidence" value="ECO:0000318"/>
    <property type="project" value="GO_Central"/>
</dbReference>
<dbReference type="GO" id="GO:0006355">
    <property type="term" value="P:regulation of DNA-templated transcription"/>
    <property type="evidence" value="ECO:0000318"/>
    <property type="project" value="GO_Central"/>
</dbReference>
<dbReference type="CDD" id="cd00167">
    <property type="entry name" value="SANT"/>
    <property type="match status" value="2"/>
</dbReference>
<dbReference type="FunFam" id="1.10.10.60:FF:000015">
    <property type="entry name" value="Transcription factor RAX3"/>
    <property type="match status" value="1"/>
</dbReference>
<dbReference type="Gene3D" id="1.10.10.60">
    <property type="entry name" value="Homeodomain-like"/>
    <property type="match status" value="2"/>
</dbReference>
<dbReference type="InterPro" id="IPR009057">
    <property type="entry name" value="Homeodomain-like_sf"/>
</dbReference>
<dbReference type="InterPro" id="IPR017930">
    <property type="entry name" value="Myb_dom"/>
</dbReference>
<dbReference type="InterPro" id="IPR015495">
    <property type="entry name" value="Myb_TF_plants"/>
</dbReference>
<dbReference type="InterPro" id="IPR001005">
    <property type="entry name" value="SANT/Myb"/>
</dbReference>
<dbReference type="PANTHER" id="PTHR47999:SF107">
    <property type="entry name" value="TRANSCRIPTION FACTOR MYB114-LIKE"/>
    <property type="match status" value="1"/>
</dbReference>
<dbReference type="PANTHER" id="PTHR47999">
    <property type="entry name" value="TRANSCRIPTION FACTOR MYB8-RELATED-RELATED"/>
    <property type="match status" value="1"/>
</dbReference>
<dbReference type="Pfam" id="PF00249">
    <property type="entry name" value="Myb_DNA-binding"/>
    <property type="match status" value="2"/>
</dbReference>
<dbReference type="SMART" id="SM00717">
    <property type="entry name" value="SANT"/>
    <property type="match status" value="2"/>
</dbReference>
<dbReference type="SUPFAM" id="SSF46689">
    <property type="entry name" value="Homeodomain-like"/>
    <property type="match status" value="1"/>
</dbReference>
<dbReference type="PROSITE" id="PS51294">
    <property type="entry name" value="HTH_MYB"/>
    <property type="match status" value="2"/>
</dbReference>
<keyword id="KW-0010">Activator</keyword>
<keyword id="KW-0238">DNA-binding</keyword>
<keyword id="KW-0539">Nucleus</keyword>
<keyword id="KW-1185">Reference proteome</keyword>
<keyword id="KW-0677">Repeat</keyword>
<keyword id="KW-0804">Transcription</keyword>
<keyword id="KW-0805">Transcription regulation</keyword>